<accession>M1LBQ5</accession>
<reference key="1">
    <citation type="journal article" date="2013" name="Am. J. Trop. Med. Hyg.">
        <title>Detection of human monkeypox in the republic of the congo following intensive community education.</title>
        <authorList>
            <person name="Reynolds M.G."/>
            <person name="Emerson G.L."/>
            <person name="Pukuta E."/>
            <person name="Karhemere S."/>
            <person name="Muyembe J.J."/>
            <person name="Bikindou A."/>
            <person name="McCollum A.M."/>
            <person name="Moses C."/>
            <person name="Wilkins K."/>
            <person name="Zhao H."/>
            <person name="Damon I.K."/>
            <person name="Karem K.L."/>
            <person name="Li Y."/>
            <person name="Carroll D.S."/>
            <person name="Mombouli J.V."/>
        </authorList>
    </citation>
    <scope>NUCLEOTIDE SEQUENCE [GENOMIC DNA]</scope>
    <source>
        <strain>ROC2010</strain>
    </source>
</reference>
<reference key="2">
    <citation type="journal article" date="2022" name="J. Infect. Dis.">
        <title>Exportation of Monkeypox virus from the African continent.</title>
        <authorList>
            <person name="Mauldin M.R."/>
            <person name="McCollum A.M."/>
            <person name="Nakazawa Y.J."/>
            <person name="Mandra A."/>
            <person name="Whitehouse E.R."/>
            <person name="Davidson W."/>
            <person name="Zhao H."/>
            <person name="Gao J."/>
            <person name="Li Y."/>
            <person name="Doty J."/>
            <person name="Yinka-Ogunleye A."/>
            <person name="Akinpelu A."/>
            <person name="Aruna O."/>
            <person name="Naidoo D."/>
            <person name="Lewandowski K."/>
            <person name="Afrough B."/>
            <person name="Graham V."/>
            <person name="Aarons E."/>
            <person name="Hewson R."/>
            <person name="Vipond R."/>
            <person name="Dunning J."/>
            <person name="Chand M."/>
            <person name="Brown C."/>
            <person name="Cohen-Gihon I."/>
            <person name="Erez N."/>
            <person name="Shifman O."/>
            <person name="Israeli O."/>
            <person name="Sharon M."/>
            <person name="Schwartz E."/>
            <person name="Beth-Din A."/>
            <person name="Zvi A."/>
            <person name="Mak T.M."/>
            <person name="Ng Y.K."/>
            <person name="Cui L."/>
            <person name="Lin R.T.P."/>
            <person name="Olson V.A."/>
            <person name="Brooks T."/>
            <person name="Paran N."/>
            <person name="Ihekweazu C."/>
            <person name="Reynolds M.G."/>
        </authorList>
    </citation>
    <scope>NUCLEOTIDE SEQUENCE [LARGE SCALE GENOMIC DNA]</scope>
    <source>
        <strain>MPXV-M5312_HM12_Rivers</strain>
    </source>
</reference>
<feature type="chain" id="PRO_0000457430" description="Core protein OPG115">
    <location>
        <begin position="1"/>
        <end position="233"/>
    </location>
</feature>
<protein>
    <recommendedName>
        <fullName>Core protein OPG115</fullName>
    </recommendedName>
</protein>
<keyword id="KW-1185">Reference proteome</keyword>
<keyword id="KW-0946">Virion</keyword>
<sequence>MDIFIVKDNKYPKVDNDDNEVFILLGNHNDFIRSKLTKLKEHVFFSEYIVTPDTYGSLCVELNGSSFQHGGRYIEVEEFIDAGRQVRWCSTSNHISEDIHTDKFVIYDIYTFDSFKNKRLVFVQVPPSLGDDSYLTNPLLSPYYRNSVARQMVNDMIFNQDSFLKYLLEHLIRSHYRVSKHITIVRYKDTEELNLTRICYNRDKFKAFVFAWFNGVSENEKVLDTYKKVSDLI</sequence>
<name>PG115_MONPV</name>
<proteinExistence type="inferred from homology"/>
<organism>
    <name type="scientific">Monkeypox virus</name>
    <dbReference type="NCBI Taxonomy" id="10244"/>
    <lineage>
        <taxon>Viruses</taxon>
        <taxon>Varidnaviria</taxon>
        <taxon>Bamfordvirae</taxon>
        <taxon>Nucleocytoviricota</taxon>
        <taxon>Pokkesviricetes</taxon>
        <taxon>Chitovirales</taxon>
        <taxon>Poxviridae</taxon>
        <taxon>Chordopoxvirinae</taxon>
        <taxon>Orthopoxvirus</taxon>
    </lineage>
</organism>
<organismHost>
    <name type="scientific">Cynomys gunnisoni</name>
    <name type="common">Gunnison's prairie dog</name>
    <name type="synonym">Spermophilus gunnisoni</name>
    <dbReference type="NCBI Taxonomy" id="45479"/>
</organismHost>
<organismHost>
    <name type="scientific">Cynomys leucurus</name>
    <name type="common">White-tailed prairie dog</name>
    <dbReference type="NCBI Taxonomy" id="99825"/>
</organismHost>
<organismHost>
    <name type="scientific">Cynomys ludovicianus</name>
    <name type="common">Black-tailed prairie dog</name>
    <dbReference type="NCBI Taxonomy" id="45480"/>
</organismHost>
<organismHost>
    <name type="scientific">Cynomys mexicanus</name>
    <name type="common">Mexican prairie dog</name>
    <dbReference type="NCBI Taxonomy" id="99826"/>
</organismHost>
<organismHost>
    <name type="scientific">Cynomys parvidens</name>
    <name type="common">Utah prairie dog</name>
    <dbReference type="NCBI Taxonomy" id="99827"/>
</organismHost>
<organismHost>
    <name type="scientific">Gliridae</name>
    <name type="common">dormice</name>
    <dbReference type="NCBI Taxonomy" id="30650"/>
</organismHost>
<organismHost>
    <name type="scientific">Heliosciurus ruwenzorii</name>
    <name type="common">Ruwenzori sun squirrel</name>
    <dbReference type="NCBI Taxonomy" id="226685"/>
</organismHost>
<organismHost>
    <name type="scientific">Homo sapiens</name>
    <name type="common">Human</name>
    <dbReference type="NCBI Taxonomy" id="9606"/>
</organismHost>
<organismHost>
    <name type="scientific">Mus musculus</name>
    <name type="common">Mouse</name>
    <dbReference type="NCBI Taxonomy" id="10090"/>
</organismHost>
<evidence type="ECO:0000250" key="1">
    <source>
        <dbReference type="UniProtKB" id="P04302"/>
    </source>
</evidence>
<evidence type="ECO:0000305" key="2"/>
<dbReference type="EMBL" id="KC257461">
    <property type="protein sequence ID" value="AGF37004.1"/>
    <property type="molecule type" value="Genomic_DNA"/>
</dbReference>
<dbReference type="EMBL" id="MT903340">
    <property type="protein sequence ID" value="QNP12970.1"/>
    <property type="molecule type" value="Genomic_DNA"/>
</dbReference>
<dbReference type="RefSeq" id="NP_536527.1">
    <property type="nucleotide sequence ID" value="NC_003310.1"/>
</dbReference>
<dbReference type="RefSeq" id="YP_010377097.1">
    <property type="nucleotide sequence ID" value="NC_063383.1"/>
</dbReference>
<dbReference type="GeneID" id="72551510"/>
<dbReference type="GeneID" id="929052"/>
<dbReference type="KEGG" id="vg:929052"/>
<dbReference type="Proteomes" id="UP000516359">
    <property type="component" value="Genome"/>
</dbReference>
<dbReference type="GO" id="GO:0044423">
    <property type="term" value="C:virion component"/>
    <property type="evidence" value="ECO:0007669"/>
    <property type="project" value="UniProtKB-KW"/>
</dbReference>
<dbReference type="InterPro" id="IPR007660">
    <property type="entry name" value="Poxvirus_D3"/>
</dbReference>
<dbReference type="Pfam" id="PF04580">
    <property type="entry name" value="Pox_D3"/>
    <property type="match status" value="1"/>
</dbReference>
<comment type="function">
    <text evidence="1">Late protein which is part of a large complex required for early virion morphogenesis. This complex participates in the formation of virosomes and the incorporation of virosomal contents into nascent immature virions.</text>
</comment>
<comment type="subunit">
    <text evidence="1">Part of a complex composed of the kinase OPG054, OPG092, OPG100, OPG114, OPG115, OPG142 and OPG157.</text>
</comment>
<comment type="subcellular location">
    <subcellularLocation>
        <location evidence="1">Virion</location>
    </subcellularLocation>
    <text evidence="1">Localizes to the virion core.</text>
</comment>
<comment type="similarity">
    <text evidence="2">Belongs to the orthopoxvirus OPG115 family.</text>
</comment>
<gene>
    <name type="primary">OPG115</name>
    <name type="ORF">MPXVgp100</name>
</gene>